<dbReference type="EMBL" id="CP000480">
    <property type="protein sequence ID" value="ABK72614.1"/>
    <property type="molecule type" value="Genomic_DNA"/>
</dbReference>
<dbReference type="EMBL" id="CP001663">
    <property type="protein sequence ID" value="AFP38017.1"/>
    <property type="molecule type" value="Genomic_DNA"/>
</dbReference>
<dbReference type="RefSeq" id="WP_003892970.1">
    <property type="nucleotide sequence ID" value="NZ_SIJM01000016.1"/>
</dbReference>
<dbReference type="RefSeq" id="YP_885961.1">
    <property type="nucleotide sequence ID" value="NC_008596.1"/>
</dbReference>
<dbReference type="SMR" id="A0QSS3"/>
<dbReference type="STRING" id="246196.MSMEG_1582"/>
<dbReference type="PaxDb" id="246196-MSMEI_1544"/>
<dbReference type="GeneID" id="93456421"/>
<dbReference type="KEGG" id="msb:LJ00_07900"/>
<dbReference type="KEGG" id="msg:MSMEI_1544"/>
<dbReference type="KEGG" id="msm:MSMEG_1582"/>
<dbReference type="PATRIC" id="fig|246196.19.peg.1568"/>
<dbReference type="eggNOG" id="COG0234">
    <property type="taxonomic scope" value="Bacteria"/>
</dbReference>
<dbReference type="OrthoDB" id="9806791at2"/>
<dbReference type="Proteomes" id="UP000000757">
    <property type="component" value="Chromosome"/>
</dbReference>
<dbReference type="Proteomes" id="UP000006158">
    <property type="component" value="Chromosome"/>
</dbReference>
<dbReference type="GO" id="GO:0005737">
    <property type="term" value="C:cytoplasm"/>
    <property type="evidence" value="ECO:0007669"/>
    <property type="project" value="UniProtKB-SubCell"/>
</dbReference>
<dbReference type="GO" id="GO:0005524">
    <property type="term" value="F:ATP binding"/>
    <property type="evidence" value="ECO:0007669"/>
    <property type="project" value="InterPro"/>
</dbReference>
<dbReference type="GO" id="GO:0046872">
    <property type="term" value="F:metal ion binding"/>
    <property type="evidence" value="ECO:0007669"/>
    <property type="project" value="TreeGrafter"/>
</dbReference>
<dbReference type="GO" id="GO:0044183">
    <property type="term" value="F:protein folding chaperone"/>
    <property type="evidence" value="ECO:0007669"/>
    <property type="project" value="InterPro"/>
</dbReference>
<dbReference type="GO" id="GO:0051087">
    <property type="term" value="F:protein-folding chaperone binding"/>
    <property type="evidence" value="ECO:0007669"/>
    <property type="project" value="TreeGrafter"/>
</dbReference>
<dbReference type="GO" id="GO:0051082">
    <property type="term" value="F:unfolded protein binding"/>
    <property type="evidence" value="ECO:0007669"/>
    <property type="project" value="TreeGrafter"/>
</dbReference>
<dbReference type="GO" id="GO:0051085">
    <property type="term" value="P:chaperone cofactor-dependent protein refolding"/>
    <property type="evidence" value="ECO:0007669"/>
    <property type="project" value="TreeGrafter"/>
</dbReference>
<dbReference type="CDD" id="cd00320">
    <property type="entry name" value="cpn10"/>
    <property type="match status" value="1"/>
</dbReference>
<dbReference type="FunFam" id="2.30.33.40:FF:000001">
    <property type="entry name" value="10 kDa chaperonin"/>
    <property type="match status" value="1"/>
</dbReference>
<dbReference type="Gene3D" id="2.30.33.40">
    <property type="entry name" value="GroES chaperonin"/>
    <property type="match status" value="1"/>
</dbReference>
<dbReference type="HAMAP" id="MF_00580">
    <property type="entry name" value="CH10"/>
    <property type="match status" value="1"/>
</dbReference>
<dbReference type="InterPro" id="IPR020818">
    <property type="entry name" value="Chaperonin_GroES"/>
</dbReference>
<dbReference type="InterPro" id="IPR037124">
    <property type="entry name" value="Chaperonin_GroES_sf"/>
</dbReference>
<dbReference type="InterPro" id="IPR018369">
    <property type="entry name" value="Chaprnonin_Cpn10_CS"/>
</dbReference>
<dbReference type="InterPro" id="IPR011032">
    <property type="entry name" value="GroES-like_sf"/>
</dbReference>
<dbReference type="NCBIfam" id="NF001530">
    <property type="entry name" value="PRK00364.1-6"/>
    <property type="match status" value="1"/>
</dbReference>
<dbReference type="NCBIfam" id="NF001531">
    <property type="entry name" value="PRK00364.2-2"/>
    <property type="match status" value="1"/>
</dbReference>
<dbReference type="NCBIfam" id="NF001533">
    <property type="entry name" value="PRK00364.2-4"/>
    <property type="match status" value="1"/>
</dbReference>
<dbReference type="NCBIfam" id="NF001534">
    <property type="entry name" value="PRK00364.2-5"/>
    <property type="match status" value="1"/>
</dbReference>
<dbReference type="PANTHER" id="PTHR10772">
    <property type="entry name" value="10 KDA HEAT SHOCK PROTEIN"/>
    <property type="match status" value="1"/>
</dbReference>
<dbReference type="PANTHER" id="PTHR10772:SF58">
    <property type="entry name" value="CO-CHAPERONIN GROES"/>
    <property type="match status" value="1"/>
</dbReference>
<dbReference type="Pfam" id="PF00166">
    <property type="entry name" value="Cpn10"/>
    <property type="match status" value="1"/>
</dbReference>
<dbReference type="PRINTS" id="PR00297">
    <property type="entry name" value="CHAPERONIN10"/>
</dbReference>
<dbReference type="SMART" id="SM00883">
    <property type="entry name" value="Cpn10"/>
    <property type="match status" value="1"/>
</dbReference>
<dbReference type="SUPFAM" id="SSF50129">
    <property type="entry name" value="GroES-like"/>
    <property type="match status" value="1"/>
</dbReference>
<dbReference type="PROSITE" id="PS00681">
    <property type="entry name" value="CHAPERONINS_CPN10"/>
    <property type="match status" value="1"/>
</dbReference>
<evidence type="ECO:0000255" key="1">
    <source>
        <dbReference type="HAMAP-Rule" id="MF_00580"/>
    </source>
</evidence>
<evidence type="ECO:0000269" key="2">
    <source>
    </source>
</evidence>
<organism>
    <name type="scientific">Mycolicibacterium smegmatis (strain ATCC 700084 / mc(2)155)</name>
    <name type="common">Mycobacterium smegmatis</name>
    <dbReference type="NCBI Taxonomy" id="246196"/>
    <lineage>
        <taxon>Bacteria</taxon>
        <taxon>Bacillati</taxon>
        <taxon>Actinomycetota</taxon>
        <taxon>Actinomycetes</taxon>
        <taxon>Mycobacteriales</taxon>
        <taxon>Mycobacteriaceae</taxon>
        <taxon>Mycolicibacterium</taxon>
    </lineage>
</organism>
<protein>
    <recommendedName>
        <fullName evidence="1">Co-chaperonin GroES</fullName>
    </recommendedName>
    <alternativeName>
        <fullName evidence="1">10 kDa chaperonin</fullName>
    </alternativeName>
    <alternativeName>
        <fullName evidence="1">Chaperonin-10</fullName>
        <shortName evidence="1">Cpn10</shortName>
    </alternativeName>
</protein>
<sequence length="100" mass="10763">MASVNIKPLEDKILVQANEAETTTASGLVIPDTAKEKPQEGTVVAVGPGRWDEDGEKRIPLDVAEGDTVIYSKYGGTEIKYNGEEYLILSARDVLAVVSK</sequence>
<name>CH10_MYCS2</name>
<feature type="initiator methionine" description="Removed" evidence="2">
    <location>
        <position position="1"/>
    </location>
</feature>
<feature type="chain" id="PRO_1000025304" description="Co-chaperonin GroES">
    <location>
        <begin position="2"/>
        <end position="100"/>
    </location>
</feature>
<accession>A0QSS3</accession>
<accession>I7FYF9</accession>
<comment type="function">
    <text evidence="1">Together with the chaperonin GroEL, plays an essential role in assisting protein folding. The GroEL-GroES system forms a nano-cage that allows encapsulation of the non-native substrate proteins and provides a physical environment optimized to promote and accelerate protein folding. GroES binds to the apical surface of the GroEL ring, thereby capping the opening of the GroEL channel.</text>
</comment>
<comment type="subunit">
    <text evidence="1">Heptamer of 7 subunits arranged in a ring. Interacts with the chaperonin GroEL.</text>
</comment>
<comment type="subcellular location">
    <subcellularLocation>
        <location evidence="1">Cytoplasm</location>
    </subcellularLocation>
</comment>
<comment type="similarity">
    <text evidence="1">Belongs to the GroES chaperonin family.</text>
</comment>
<reference key="1">
    <citation type="submission" date="2006-10" db="EMBL/GenBank/DDBJ databases">
        <authorList>
            <person name="Fleischmann R.D."/>
            <person name="Dodson R.J."/>
            <person name="Haft D.H."/>
            <person name="Merkel J.S."/>
            <person name="Nelson W.C."/>
            <person name="Fraser C.M."/>
        </authorList>
    </citation>
    <scope>NUCLEOTIDE SEQUENCE [LARGE SCALE GENOMIC DNA]</scope>
    <source>
        <strain>ATCC 700084 / mc(2)155</strain>
    </source>
</reference>
<reference key="2">
    <citation type="journal article" date="2007" name="Genome Biol.">
        <title>Interrupted coding sequences in Mycobacterium smegmatis: authentic mutations or sequencing errors?</title>
        <authorList>
            <person name="Deshayes C."/>
            <person name="Perrodou E."/>
            <person name="Gallien S."/>
            <person name="Euphrasie D."/>
            <person name="Schaeffer C."/>
            <person name="Van-Dorsselaer A."/>
            <person name="Poch O."/>
            <person name="Lecompte O."/>
            <person name="Reyrat J.-M."/>
        </authorList>
    </citation>
    <scope>NUCLEOTIDE SEQUENCE [LARGE SCALE GENOMIC DNA]</scope>
    <source>
        <strain>ATCC 700084 / mc(2)155</strain>
    </source>
</reference>
<reference key="3">
    <citation type="journal article" date="2009" name="Genome Res.">
        <title>Ortho-proteogenomics: multiple proteomes investigation through orthology and a new MS-based protocol.</title>
        <authorList>
            <person name="Gallien S."/>
            <person name="Perrodou E."/>
            <person name="Carapito C."/>
            <person name="Deshayes C."/>
            <person name="Reyrat J.-M."/>
            <person name="Van Dorsselaer A."/>
            <person name="Poch O."/>
            <person name="Schaeffer C."/>
            <person name="Lecompte O."/>
        </authorList>
    </citation>
    <scope>NUCLEOTIDE SEQUENCE [LARGE SCALE GENOMIC DNA]</scope>
    <scope>IDENTIFICATION BY MASS SPECTROMETRY [LARGE SCALE ANALYSIS]</scope>
    <scope>CLEAVAGE OF INITIATOR METHIONINE</scope>
    <source>
        <strain>ATCC 700084 / mc(2)155</strain>
    </source>
</reference>
<keyword id="KW-0143">Chaperone</keyword>
<keyword id="KW-0963">Cytoplasm</keyword>
<keyword id="KW-1185">Reference proteome</keyword>
<gene>
    <name evidence="1" type="primary">groES</name>
    <name evidence="1" type="synonym">groS</name>
    <name type="ordered locus">MSMEG_1582</name>
    <name type="ordered locus">MSMEI_1544</name>
</gene>
<proteinExistence type="evidence at protein level"/>